<organismHost>
    <name type="scientific">Pongo pygmaeus</name>
    <name type="common">Bornean orangutan</name>
    <dbReference type="NCBI Taxonomy" id="9600"/>
</organismHost>
<keyword id="KW-0007">Acetylation</keyword>
<keyword id="KW-0024">Alternative initiation</keyword>
<keyword id="KW-0025">Alternative splicing</keyword>
<keyword id="KW-1166">Caveolin-mediated endocytosis of virus by host</keyword>
<keyword id="KW-1170">Fusion of virus membrane with host endosomal membrane</keyword>
<keyword id="KW-1168">Fusion of virus membrane with host membrane</keyword>
<keyword id="KW-0325">Glycoprotein</keyword>
<keyword id="KW-0945">Host-virus interaction</keyword>
<keyword id="KW-0449">Lipoprotein</keyword>
<keyword id="KW-0472">Membrane</keyword>
<keyword id="KW-0519">Myristate</keyword>
<keyword id="KW-0812">Transmembrane</keyword>
<keyword id="KW-1133">Transmembrane helix</keyword>
<keyword id="KW-1161">Viral attachment to host cell</keyword>
<keyword id="KW-0261">Viral envelope protein</keyword>
<keyword id="KW-1162">Viral penetration into host cytoplasm</keyword>
<keyword id="KW-0946">Virion</keyword>
<keyword id="KW-1164">Virus endocytosis by host</keyword>
<keyword id="KW-1160">Virus entry into host cell</keyword>
<proteinExistence type="inferred from homology"/>
<protein>
    <recommendedName>
        <fullName evidence="3">Large envelope protein</fullName>
    </recommendedName>
    <alternativeName>
        <fullName evidence="3">L glycoprotein</fullName>
    </alternativeName>
    <alternativeName>
        <fullName evidence="3">L-HBsAg</fullName>
        <shortName evidence="3">LHB</shortName>
    </alternativeName>
    <alternativeName>
        <fullName evidence="3">Large S protein</fullName>
    </alternativeName>
    <alternativeName>
        <fullName evidence="3">Large surface protein</fullName>
    </alternativeName>
    <alternativeName>
        <fullName evidence="3">Major surface antigen</fullName>
    </alternativeName>
</protein>
<organism>
    <name type="scientific">Orangutan hepatitis B virus (isolate Somad)</name>
    <name type="common">HBVoru</name>
    <dbReference type="NCBI Taxonomy" id="489545"/>
    <lineage>
        <taxon>Viruses</taxon>
        <taxon>Riboviria</taxon>
        <taxon>Pararnavirae</taxon>
        <taxon>Artverviricota</taxon>
        <taxon>Revtraviricetes</taxon>
        <taxon>Blubervirales</taxon>
        <taxon>Hepadnaviridae</taxon>
        <taxon>Orthohepadnavirus</taxon>
        <taxon>Hepatitis B virus</taxon>
    </lineage>
</organism>
<sequence length="389" mass="42589">MGQNLSVTNPLGFFPEHQLDPLFRANTNNPDWDFNPNKDTWPEATKVGVGAFGPGFTPPHGGLLGWSPQAQGVTTILPAVPPPASTNRQSGRRPTPISPPLRDTHPQAMQWNSTVFHQALQDPRVRGLYFPAGGSSSGTVSPVPTTASPISSTFLKTGDPALNMESISSGFLGPLLVLQAGFFLLTKILTIPQSLDSWWTSLNFLGGAPVCPGQNSQSLTSNHSPTSCPPICPGYRWMCLRRFIIFLFILLLCLIFLLVLLDYRGMLPVCPLLPGTTTTSVGPCRTCTISAPGTSLFPSCCCTKPSDGNCTCIPIPPSWAFAKFLWGWASVRFSWLNLLVPFVQWFAGLSPTVWLSVIWMIWYWGPSLYNILSPFIPLLPIFFCLWAYI</sequence>
<reference key="1">
    <citation type="journal article" date="2001" name="J. Gen. Virol.">
        <title>Analysis of two genomic variants of orang-utan hepadnavirus and their relationship to other primate hepatitis B-like viruses.</title>
        <authorList>
            <person name="Verschoor E.J."/>
            <person name="Warren K.S."/>
            <person name="Langenhuijzen S."/>
            <person name="Heriyanto X."/>
            <person name="Swan R.A."/>
            <person name="Heeney J.L."/>
        </authorList>
    </citation>
    <scope>NUCLEOTIDE SEQUENCE [GENOMIC DNA]</scope>
</reference>
<reference key="2">
    <citation type="journal article" date="1996" name="Intervirology">
        <title>Functions of the large hepatitis B virus surface protein in viral particle morphogenesis.</title>
        <authorList>
            <person name="Bruss V."/>
            <person name="Gerhardt E."/>
            <person name="Vieluf K."/>
            <person name="Wunderlich G."/>
        </authorList>
    </citation>
    <scope>REVIEW</scope>
</reference>
<reference key="3">
    <citation type="journal article" date="1998" name="Adv. Exp. Med. Biol.">
        <title>Role of glycan processing in hepatitis B virus envelope protein trafficking.</title>
        <authorList>
            <person name="Block T.M."/>
            <person name="Lu X."/>
            <person name="Mehta A."/>
            <person name="Park J."/>
            <person name="Blumberg B.S."/>
            <person name="Dwek R."/>
        </authorList>
    </citation>
    <scope>REVIEW</scope>
</reference>
<reference key="4">
    <citation type="journal article" date="2004" name="Virus Res.">
        <title>Envelopment of the hepatitis B virus nucleocapsid.</title>
        <authorList>
            <person name="Bruss V."/>
        </authorList>
    </citation>
    <scope>REVIEW</scope>
</reference>
<reference key="5">
    <citation type="journal article" date="2006" name="Cancer Sci.">
        <title>Hepatitis B virus pre-S mutants, endoplasmic reticulum stress and hepatocarcinogenesis.</title>
        <authorList>
            <person name="Wang H.C."/>
            <person name="Huang W."/>
            <person name="Lai M.D."/>
            <person name="Su I.J."/>
        </authorList>
    </citation>
    <scope>REVIEW</scope>
</reference>
<comment type="function">
    <text evidence="3">The large envelope protein exists in two topological conformations, one which is termed 'external' or Le-HBsAg and the other 'internal' or Li-HBsAg. In its external conformation the protein attaches the virus to cell receptors and thereby initiating infection. This interaction determines the species specificity and liver tropism. This attachment induces virion internalization predominantly through caveolin-mediated endocytosis. The large envelope protein also assures fusion between virion membrane and endosomal membrane. In its internal conformation the protein plays a role in virion morphogenesis and mediates the contact with the nucleocapsid like a matrix protein.</text>
</comment>
<comment type="function">
    <text evidence="3">The middle envelope protein plays an important role in the budding of the virion. It is involved in the induction of budding in a nucleocapsid independent way. In this process the majority of envelope proteins bud to form subviral lipoprotein particles of 22 nm of diameter that do not contain a nucleocapsid.</text>
</comment>
<comment type="subunit">
    <molecule>Isoform L</molecule>
    <text evidence="2">In its internal form (Li-HBsAg), interacts with the capsid protein and with the isoform S. Interacts with host chaperone CANX.</text>
</comment>
<comment type="subunit">
    <molecule>Isoform M</molecule>
    <text evidence="2">Associates with host chaperone CANX through its pre-S2 N glycan; this association may be essential for isoform M proper secretion.</text>
</comment>
<comment type="subunit">
    <molecule>Isoform S</molecule>
    <text evidence="2">Interacts with isoform L. Interacts with the antigens of satellite virus HDV (HDVAgs); this interaction is required for encapsidation of HDV genomic RNA.</text>
</comment>
<comment type="subcellular location">
    <subcellularLocation>
        <location evidence="3">Virion membrane</location>
    </subcellularLocation>
</comment>
<comment type="alternative products">
    <event type="alternative splicing"/>
    <event type="alternative initiation"/>
    <isoform>
        <id>Q77NU1-1</id>
        <name>L</name>
        <name>Large envelope protein</name>
        <name>LHB</name>
        <name>L-HBsAg</name>
        <sequence type="displayed"/>
    </isoform>
    <isoform>
        <id>Q77NU1-2</id>
        <name>M</name>
        <name>Middle envelope protein</name>
        <name>MHB</name>
        <name>M-HBsAg</name>
        <sequence type="described" ref="VSP_031469"/>
    </isoform>
    <isoform>
        <id>Q77NU1-3</id>
        <name>S</name>
        <name>Small envelope protein</name>
        <name>SHB</name>
        <name>S-HBsAg</name>
        <sequence type="described" ref="VSP_031468"/>
    </isoform>
</comment>
<comment type="domain">
    <text evidence="3">The large envelope protein is synthesized with the pre-S region at the cytosolic side of the endoplasmic reticulum and, hence will be within the virion after budding. Therefore the pre-S region is not N-glycosylated. Later a post-translational translocation of N-terminal pre-S and TM1 domains occur in about 50% of proteins at the virion surface. These molecules change their topology by an unknown mechanism, resulting in exposure of pre-S region at virion surface. For isoform M in contrast, the pre-S2 region is translocated cotranslationally to the endoplasmic reticulum lumen and is N-glycosylated.</text>
</comment>
<comment type="PTM">
    <text evidence="1 3">Isoform M is N-terminally acetylated by host at a ratio of 90%, and N-glycosylated by host at the pre-S2 region.</text>
</comment>
<comment type="PTM">
    <text evidence="3">Myristoylated.</text>
</comment>
<comment type="similarity">
    <text evidence="3">Belongs to the orthohepadnavirus major surface antigen family.</text>
</comment>
<name>HBSAG_HBVOR</name>
<dbReference type="EMBL" id="AF193863">
    <property type="protein sequence ID" value="AAF33120.1"/>
    <property type="molecule type" value="Genomic_DNA"/>
</dbReference>
<dbReference type="SMR" id="Q77NU1"/>
<dbReference type="GlyCosmos" id="Q77NU1">
    <property type="glycosylation" value="1 site, No reported glycans"/>
</dbReference>
<dbReference type="Proteomes" id="UP000001183">
    <property type="component" value="Genome"/>
</dbReference>
<dbReference type="GO" id="GO:0016020">
    <property type="term" value="C:membrane"/>
    <property type="evidence" value="ECO:0007669"/>
    <property type="project" value="UniProtKB-UniRule"/>
</dbReference>
<dbReference type="GO" id="GO:0019031">
    <property type="term" value="C:viral envelope"/>
    <property type="evidence" value="ECO:0007669"/>
    <property type="project" value="UniProtKB-KW"/>
</dbReference>
<dbReference type="GO" id="GO:0055036">
    <property type="term" value="C:virion membrane"/>
    <property type="evidence" value="ECO:0007669"/>
    <property type="project" value="UniProtKB-SubCell"/>
</dbReference>
<dbReference type="GO" id="GO:0075513">
    <property type="term" value="P:caveolin-mediated endocytosis of virus by host cell"/>
    <property type="evidence" value="ECO:0007669"/>
    <property type="project" value="UniProtKB-KW"/>
</dbReference>
<dbReference type="GO" id="GO:0039654">
    <property type="term" value="P:fusion of virus membrane with host endosome membrane"/>
    <property type="evidence" value="ECO:0007669"/>
    <property type="project" value="UniProtKB-KW"/>
</dbReference>
<dbReference type="GO" id="GO:0019062">
    <property type="term" value="P:virion attachment to host cell"/>
    <property type="evidence" value="ECO:0007669"/>
    <property type="project" value="UniProtKB-UniRule"/>
</dbReference>
<dbReference type="HAMAP" id="MF_04075">
    <property type="entry name" value="HBV_HBSAG"/>
    <property type="match status" value="1"/>
</dbReference>
<dbReference type="InterPro" id="IPR000349">
    <property type="entry name" value="HBV_HBSAG"/>
</dbReference>
<dbReference type="Pfam" id="PF00695">
    <property type="entry name" value="vMSA"/>
    <property type="match status" value="1"/>
</dbReference>
<evidence type="ECO:0000250" key="1">
    <source>
        <dbReference type="UniProtKB" id="P03138"/>
    </source>
</evidence>
<evidence type="ECO:0000250" key="2">
    <source>
        <dbReference type="UniProtKB" id="P03141"/>
    </source>
</evidence>
<evidence type="ECO:0000255" key="3">
    <source>
        <dbReference type="HAMAP-Rule" id="MF_04075"/>
    </source>
</evidence>
<evidence type="ECO:0000256" key="4">
    <source>
        <dbReference type="SAM" id="MobiDB-lite"/>
    </source>
</evidence>
<evidence type="ECO:0000305" key="5"/>
<gene>
    <name evidence="3" type="primary">S</name>
</gene>
<feature type="initiator methionine" description="Removed; by host" evidence="3">
    <location>
        <position position="1"/>
    </location>
</feature>
<feature type="chain" id="PRO_0000319293" description="Large envelope protein" evidence="3">
    <location>
        <begin position="2"/>
        <end position="389"/>
    </location>
</feature>
<feature type="topological domain" description="Intravirion; in internal conformation" evidence="3">
    <location>
        <begin position="2"/>
        <end position="242"/>
    </location>
</feature>
<feature type="topological domain" description="Virion surface; in external conformation" evidence="3">
    <location>
        <begin position="2"/>
        <end position="170"/>
    </location>
</feature>
<feature type="transmembrane region" description="Helical; Name=TM1; Note=In external conformation" evidence="3">
    <location>
        <begin position="171"/>
        <end position="191"/>
    </location>
</feature>
<feature type="topological domain" description="Intravirion; in external conformation" evidence="3">
    <location>
        <begin position="192"/>
        <end position="242"/>
    </location>
</feature>
<feature type="transmembrane region" description="Helical; Name=TM2" evidence="3">
    <location>
        <begin position="243"/>
        <end position="263"/>
    </location>
</feature>
<feature type="topological domain" description="Virion surface" evidence="3">
    <location>
        <begin position="264"/>
        <end position="337"/>
    </location>
</feature>
<feature type="transmembrane region" description="Helical" evidence="3">
    <location>
        <begin position="338"/>
        <end position="358"/>
    </location>
</feature>
<feature type="topological domain" description="Intravirion" evidence="3">
    <location>
        <begin position="359"/>
        <end position="364"/>
    </location>
</feature>
<feature type="transmembrane region" description="Helical; Name=TM3" evidence="3">
    <location>
        <begin position="365"/>
        <end position="387"/>
    </location>
</feature>
<feature type="topological domain" description="Virion surface" evidence="3">
    <location>
        <begin position="388"/>
        <end position="389"/>
    </location>
</feature>
<feature type="region of interest" description="Pre-S" evidence="3">
    <location>
        <begin position="2"/>
        <end position="163"/>
    </location>
</feature>
<feature type="region of interest" description="Pre-S1" evidence="3">
    <location>
        <begin position="2"/>
        <end position="108"/>
    </location>
</feature>
<feature type="region of interest" description="Disordered" evidence="4">
    <location>
        <begin position="78"/>
        <end position="105"/>
    </location>
</feature>
<feature type="region of interest" description="Pre-S2" evidence="3">
    <location>
        <begin position="109"/>
        <end position="163"/>
    </location>
</feature>
<feature type="lipid moiety-binding region" description="N-myristoyl glycine; by host" evidence="3">
    <location>
        <position position="2"/>
    </location>
</feature>
<feature type="glycosylation site" description="N-linked (GlcNAc...) asparagine; by host" evidence="3">
    <location>
        <position position="309"/>
    </location>
</feature>
<feature type="splice variant" id="VSP_031468" description="In isoform S." evidence="5">
    <location>
        <begin position="1"/>
        <end position="163"/>
    </location>
</feature>
<feature type="splice variant" id="VSP_031469" description="In isoform M." evidence="5">
    <location>
        <begin position="1"/>
        <end position="108"/>
    </location>
</feature>
<feature type="modified residue" description="N-acetylmethionine" evidence="1">
    <location sequence="Q77NU1-2">
        <position position="1"/>
    </location>
</feature>
<accession>Q77NU1</accession>